<name>ELCG_PHANO</name>
<keyword id="KW-0186">Copper</keyword>
<keyword id="KW-0325">Glycoprotein</keyword>
<keyword id="KW-0479">Metal-binding</keyword>
<keyword id="KW-0560">Oxidoreductase</keyword>
<keyword id="KW-0677">Repeat</keyword>
<keyword id="KW-0732">Signal</keyword>
<protein>
    <recommendedName>
        <fullName evidence="7">Multicopper oxidase elcG</fullName>
        <ecNumber evidence="8">1.-.-.-</ecNumber>
    </recommendedName>
    <alternativeName>
        <fullName evidence="7">Elsinochrome C biosynthesis cluster protein G</fullName>
    </alternativeName>
    <alternativeName>
        <fullName evidence="7">Laccase elcG</fullName>
    </alternativeName>
</protein>
<accession>Q0UHZ8</accession>
<sequence length="624" mass="69719">MACNILNFLTGLLSLSSTLPSTYFPSCIKPSNSHVSQNPVRFEVHLTPGRANPTGAGFRDVILVNGTFTGPTLRLSRGDNVEFLVRNHLREDTAVHFHGITQSLSPWADGTPGIAQRPIRPGAAYLYRWRADESGVFFYHAHSRGQLMDGMYGAIVIERGEDEPSPFHMISHEASDWELMREAEREVQTLMISDWSQFSFGEVMGVEREANIDFTCMDAIVVNGAGSEYCLERELLNEYTNPLVKFILSHTDEKEITDKGCVPPLRLFQGNYSLHLDTLPPEAFRKCIPGVGGGANHTVTVHSSNRWAALTFINPGGLYPLKVTIDNHPMHVFAVDGHYIYPQIVDQILVNNGERYSVFVKLDQEVGRYTIRIANDLLGQVLGGFAALSYNGVMDDPPHPKPLMNYAGGSLVKNIRVFDEFNTRPYPPKPPASVADRTHKFMVRKLAQPHGAYEWTMSGIEGLNMTTEDVASPFLFQDPSQIETSELMLTTKKNEWVDLIIEVEGPFAQSHPMHKHGNKAFIVGRGVGFFPWATVEEAEKHLPRGTFNFIDPPYKDTFKTLEGVNNNAWLALRYHANSPGAWLFHCHIQTHLAGGMGVVILDGVDEWPELPEAYAEWNGFEAPV</sequence>
<proteinExistence type="evidence at protein level"/>
<reference key="1">
    <citation type="journal article" date="2007" name="Plant Cell">
        <title>Dothideomycete-plant interactions illuminated by genome sequencing and EST analysis of the wheat pathogen Stagonospora nodorum.</title>
        <authorList>
            <person name="Hane J.K."/>
            <person name="Lowe R.G.T."/>
            <person name="Solomon P.S."/>
            <person name="Tan K.-C."/>
            <person name="Schoch C.L."/>
            <person name="Spatafora J.W."/>
            <person name="Crous P.W."/>
            <person name="Kodira C.D."/>
            <person name="Birren B.W."/>
            <person name="Galagan J.E."/>
            <person name="Torriani S.F.F."/>
            <person name="McDonald B.A."/>
            <person name="Oliver R.P."/>
        </authorList>
    </citation>
    <scope>NUCLEOTIDE SEQUENCE [LARGE SCALE GENOMIC DNA]</scope>
    <source>
        <strain>SN15 / ATCC MYA-4574 / FGSC 10173</strain>
    </source>
</reference>
<reference key="2">
    <citation type="journal article" date="2017" name="Environ. Microbiol.">
        <title>Functional genomics-guided discovery of a light-activated phytotoxin in the wheat pathogen Parastagonospora nodorum via pathway activation.</title>
        <authorList>
            <person name="Chooi Y.H."/>
            <person name="Zhang G."/>
            <person name="Hu J."/>
            <person name="Muria-Gonzalez M.J."/>
            <person name="Tran P.N."/>
            <person name="Pettitt A."/>
            <person name="Maier A.G."/>
            <person name="Barrow R.A."/>
            <person name="Solomon P.S."/>
        </authorList>
    </citation>
    <scope>INDUCTION</scope>
    <scope>FUNCTION</scope>
    <scope>PATHWAY</scope>
</reference>
<reference key="3">
    <citation type="journal article" date="2019" name="Chem. Sci.">
        <title>Heterologous biosynthesis of elsinochrome A sheds light on the formation of the photosensitive perylenequinone system.</title>
        <authorList>
            <person name="Hu J."/>
            <person name="Sarrami F."/>
            <person name="Li H."/>
            <person name="Zhang G."/>
            <person name="Stubbs K.A."/>
            <person name="Lacey E."/>
            <person name="Stewart S.G."/>
            <person name="Karton A."/>
            <person name="Piggott A.M."/>
            <person name="Chooi Y.H."/>
        </authorList>
    </citation>
    <scope>FUNCTION</scope>
    <scope>CATALYTIC ACTIVITY</scope>
    <scope>PATHWAY</scope>
</reference>
<feature type="signal peptide" evidence="3">
    <location>
        <begin position="1"/>
        <end position="18"/>
    </location>
</feature>
<feature type="chain" id="PRO_5004177841" description="Multicopper oxidase elcG" evidence="3">
    <location>
        <begin position="19"/>
        <end position="624"/>
    </location>
</feature>
<feature type="domain" description="Plastocyanin-like 1" evidence="3">
    <location>
        <begin position="48"/>
        <end position="160"/>
    </location>
</feature>
<feature type="domain" description="Plastocyanin-like 2" evidence="3">
    <location>
        <begin position="216"/>
        <end position="373"/>
    </location>
</feature>
<feature type="domain" description="Plastocyanin-like 3" evidence="3">
    <location>
        <begin position="474"/>
        <end position="603"/>
    </location>
</feature>
<feature type="binding site" evidence="2">
    <location>
        <position position="96"/>
    </location>
    <ligand>
        <name>Cu cation</name>
        <dbReference type="ChEBI" id="CHEBI:23378"/>
        <label>1</label>
    </ligand>
</feature>
<feature type="binding site" evidence="2">
    <location>
        <position position="98"/>
    </location>
    <ligand>
        <name>Cu cation</name>
        <dbReference type="ChEBI" id="CHEBI:23378"/>
        <label>2</label>
    </ligand>
</feature>
<feature type="binding site" evidence="2">
    <location>
        <position position="140"/>
    </location>
    <ligand>
        <name>Cu cation</name>
        <dbReference type="ChEBI" id="CHEBI:23378"/>
        <label>2</label>
    </ligand>
</feature>
<feature type="binding site" evidence="2">
    <location>
        <position position="142"/>
    </location>
    <ligand>
        <name>Cu cation</name>
        <dbReference type="ChEBI" id="CHEBI:23378"/>
        <label>3</label>
    </ligand>
</feature>
<feature type="binding site" evidence="2">
    <location>
        <position position="511"/>
    </location>
    <ligand>
        <name>Cu cation</name>
        <dbReference type="ChEBI" id="CHEBI:23378"/>
        <label>4</label>
    </ligand>
</feature>
<feature type="binding site" evidence="2">
    <location>
        <position position="514"/>
    </location>
    <ligand>
        <name>Cu cation</name>
        <dbReference type="ChEBI" id="CHEBI:23378"/>
        <label>1</label>
    </ligand>
</feature>
<feature type="binding site" evidence="2">
    <location>
        <position position="516"/>
    </location>
    <ligand>
        <name>Cu cation</name>
        <dbReference type="ChEBI" id="CHEBI:23378"/>
        <label>3</label>
    </ligand>
</feature>
<feature type="binding site" evidence="2">
    <location>
        <position position="585"/>
    </location>
    <ligand>
        <name>Cu cation</name>
        <dbReference type="ChEBI" id="CHEBI:23378"/>
        <label>3</label>
    </ligand>
</feature>
<feature type="binding site" evidence="2">
    <location>
        <position position="586"/>
    </location>
    <ligand>
        <name>Cu cation</name>
        <dbReference type="ChEBI" id="CHEBI:23378"/>
        <label>4</label>
    </ligand>
</feature>
<feature type="binding site" evidence="2">
    <location>
        <position position="587"/>
    </location>
    <ligand>
        <name>Cu cation</name>
        <dbReference type="ChEBI" id="CHEBI:23378"/>
        <label>2</label>
    </ligand>
</feature>
<feature type="binding site" evidence="2">
    <location>
        <position position="591"/>
    </location>
    <ligand>
        <name>Cu cation</name>
        <dbReference type="ChEBI" id="CHEBI:23378"/>
        <label>4</label>
    </ligand>
</feature>
<feature type="glycosylation site" description="N-linked (GlcNAc...) asparagine" evidence="4">
    <location>
        <position position="65"/>
    </location>
</feature>
<feature type="glycosylation site" description="N-linked (GlcNAc...) asparagine" evidence="4">
    <location>
        <position position="271"/>
    </location>
</feature>
<feature type="glycosylation site" description="N-linked (GlcNAc...) asparagine" evidence="4">
    <location>
        <position position="296"/>
    </location>
</feature>
<feature type="glycosylation site" description="N-linked (GlcNAc...) asparagine" evidence="4">
    <location>
        <position position="464"/>
    </location>
</feature>
<gene>
    <name evidence="7" type="primary">elcG</name>
    <name type="ORF">SNOG_08616</name>
</gene>
<evidence type="ECO:0000250" key="1">
    <source>
        <dbReference type="UniProtKB" id="Q6DQW3"/>
    </source>
</evidence>
<evidence type="ECO:0000250" key="2">
    <source>
        <dbReference type="UniProtKB" id="Q70KY3"/>
    </source>
</evidence>
<evidence type="ECO:0000255" key="3"/>
<evidence type="ECO:0000255" key="4">
    <source>
        <dbReference type="PROSITE-ProRule" id="PRU00498"/>
    </source>
</evidence>
<evidence type="ECO:0000269" key="5">
    <source>
    </source>
</evidence>
<evidence type="ECO:0000269" key="6">
    <source>
    </source>
</evidence>
<evidence type="ECO:0000303" key="7">
    <source>
    </source>
</evidence>
<evidence type="ECO:0000305" key="8"/>
<evidence type="ECO:0000305" key="9">
    <source>
    </source>
</evidence>
<organism>
    <name type="scientific">Phaeosphaeria nodorum (strain SN15 / ATCC MYA-4574 / FGSC 10173)</name>
    <name type="common">Glume blotch fungus</name>
    <name type="synonym">Parastagonospora nodorum</name>
    <dbReference type="NCBI Taxonomy" id="321614"/>
    <lineage>
        <taxon>Eukaryota</taxon>
        <taxon>Fungi</taxon>
        <taxon>Dikarya</taxon>
        <taxon>Ascomycota</taxon>
        <taxon>Pezizomycotina</taxon>
        <taxon>Dothideomycetes</taxon>
        <taxon>Pleosporomycetidae</taxon>
        <taxon>Pleosporales</taxon>
        <taxon>Pleosporineae</taxon>
        <taxon>Phaeosphaeriaceae</taxon>
        <taxon>Parastagonospora</taxon>
    </lineage>
</organism>
<comment type="function">
    <text evidence="1 5 6 9">Multicopper oxidase; part of the gene cluster that mediates the biosynthesis of elsinochrome C, a perelyenequinone phytotoxin structurally similar to cercosporin (PubMed:28251756, PubMed:30809363). The first step of elsinochrome C biosynthesis is performed by the polyketide synthase elcA which catalyzes the formation of nor-toralactone (PubMed:28251756, PubMed:30809363). The starter unit acyltransferase (SAT) domain of elcA initiates polyketide extension by the selective utilization of acetyl-CoA, which is elongated to the heptaketide in the beta-ketoacyl synthase (KS) domain by successive condensations with six malonyl units introduced by the malonyl acyltransferase (MAT) domain (By similarity). The product template (PT) domain catalyzes C4-C9 and C2-C11 aldol cyclizations and dehydrations to a trihydroxynaphthalene, which is thought to be delivered to the thioesterase (TE) domain for product release (By similarity). The bifunctional enzyme elcB then methylates nor-toralactone to toralactone before conducting an unusual oxidative aromatic ring opening (PubMed:28251756, PubMed:30809363). The next step in perylenequinone biosynthesis is an O-methylation at the nascent OH-6 of the elcB product performed by the O-methyltransferase elcD (PubMed:30809363). The oxidative coupling of the two monomeric naphthol units in perylenequinone biosynthesis is catalyzed by the FAD-dependent monooxygenase elcE and the multicopper oxidase elcG (PubMed:30809363). ElcG might catalyze the first intermolecular coupling in a regio- and stereo-selective manner via a phenol radical coupling mechanism and the elcE could forge the second C-C bond intramolecularly via a hydride transfer mechanism (PubMed:30809363). The fasciclin domain-containing protein elcF might also play a role duting this step (Probable). The last piece of the puzzle in the biosynthesis of elsinochrome C is the additional annulation by enolate coupling to afford the dihydrobenzo(ghi)perylenequinone system, catalyzed by the FAD-dependent monooxygenase elcH (PubMed:30809363).</text>
</comment>
<comment type="pathway">
    <text evidence="5 6">Secondary metabolite biosynthesis.</text>
</comment>
<comment type="induction">
    <text evidence="5">Expression is up-regulated during the late stage of P.nodorum wheat leaf infection and is controlled by the cluster specific transporter elcR.</text>
</comment>
<comment type="similarity">
    <text evidence="8">Belongs to the multicopper oxidase family.</text>
</comment>
<dbReference type="EC" id="1.-.-.-" evidence="8"/>
<dbReference type="EMBL" id="CH445337">
    <property type="protein sequence ID" value="EAT83784.1"/>
    <property type="molecule type" value="Genomic_DNA"/>
</dbReference>
<dbReference type="RefSeq" id="XP_001798925.1">
    <property type="nucleotide sequence ID" value="XM_001798873.1"/>
</dbReference>
<dbReference type="SMR" id="Q0UHZ8"/>
<dbReference type="STRING" id="321614.Q0UHZ8"/>
<dbReference type="GlyCosmos" id="Q0UHZ8">
    <property type="glycosylation" value="4 sites, No reported glycans"/>
</dbReference>
<dbReference type="EnsemblFungi" id="SNOT_08616">
    <property type="protein sequence ID" value="SNOT_08616"/>
    <property type="gene ID" value="SNOG_08616"/>
</dbReference>
<dbReference type="GeneID" id="5975824"/>
<dbReference type="KEGG" id="pno:SNOG_08616"/>
<dbReference type="VEuPathDB" id="FungiDB:JI435_086160"/>
<dbReference type="eggNOG" id="KOG1263">
    <property type="taxonomic scope" value="Eukaryota"/>
</dbReference>
<dbReference type="HOGENOM" id="CLU_006504_5_0_1"/>
<dbReference type="InParanoid" id="Q0UHZ8"/>
<dbReference type="OMA" id="NSTWMAL"/>
<dbReference type="OrthoDB" id="2121828at2759"/>
<dbReference type="Proteomes" id="UP000001055">
    <property type="component" value="Unassembled WGS sequence"/>
</dbReference>
<dbReference type="GO" id="GO:0005507">
    <property type="term" value="F:copper ion binding"/>
    <property type="evidence" value="ECO:0007669"/>
    <property type="project" value="InterPro"/>
</dbReference>
<dbReference type="GO" id="GO:0016491">
    <property type="term" value="F:oxidoreductase activity"/>
    <property type="evidence" value="ECO:0000318"/>
    <property type="project" value="GO_Central"/>
</dbReference>
<dbReference type="CDD" id="cd13850">
    <property type="entry name" value="CuRO_1_Abr2_like"/>
    <property type="match status" value="1"/>
</dbReference>
<dbReference type="CDD" id="cd13876">
    <property type="entry name" value="CuRO_2_Abr2_like"/>
    <property type="match status" value="1"/>
</dbReference>
<dbReference type="CDD" id="cd13898">
    <property type="entry name" value="CuRO_3_Abr2_like"/>
    <property type="match status" value="1"/>
</dbReference>
<dbReference type="FunFam" id="2.60.40.420:FF:000036">
    <property type="entry name" value="L-ascorbate oxidase"/>
    <property type="match status" value="1"/>
</dbReference>
<dbReference type="Gene3D" id="2.60.40.420">
    <property type="entry name" value="Cupredoxins - blue copper proteins"/>
    <property type="match status" value="3"/>
</dbReference>
<dbReference type="InterPro" id="IPR011707">
    <property type="entry name" value="Cu-oxidase-like_N"/>
</dbReference>
<dbReference type="InterPro" id="IPR001117">
    <property type="entry name" value="Cu-oxidase_2nd"/>
</dbReference>
<dbReference type="InterPro" id="IPR011706">
    <property type="entry name" value="Cu-oxidase_C"/>
</dbReference>
<dbReference type="InterPro" id="IPR045087">
    <property type="entry name" value="Cu-oxidase_fam"/>
</dbReference>
<dbReference type="InterPro" id="IPR033138">
    <property type="entry name" value="Cu_oxidase_CS"/>
</dbReference>
<dbReference type="InterPro" id="IPR002355">
    <property type="entry name" value="Cu_oxidase_Cu_BS"/>
</dbReference>
<dbReference type="InterPro" id="IPR008972">
    <property type="entry name" value="Cupredoxin"/>
</dbReference>
<dbReference type="PANTHER" id="PTHR11709:SF488">
    <property type="entry name" value="LACCASE-RELATED"/>
    <property type="match status" value="1"/>
</dbReference>
<dbReference type="PANTHER" id="PTHR11709">
    <property type="entry name" value="MULTI-COPPER OXIDASE"/>
    <property type="match status" value="1"/>
</dbReference>
<dbReference type="Pfam" id="PF00394">
    <property type="entry name" value="Cu-oxidase"/>
    <property type="match status" value="1"/>
</dbReference>
<dbReference type="Pfam" id="PF07731">
    <property type="entry name" value="Cu-oxidase_2"/>
    <property type="match status" value="1"/>
</dbReference>
<dbReference type="Pfam" id="PF07732">
    <property type="entry name" value="Cu-oxidase_3"/>
    <property type="match status" value="1"/>
</dbReference>
<dbReference type="SUPFAM" id="SSF49503">
    <property type="entry name" value="Cupredoxins"/>
    <property type="match status" value="3"/>
</dbReference>
<dbReference type="PROSITE" id="PS00079">
    <property type="entry name" value="MULTICOPPER_OXIDASE1"/>
    <property type="match status" value="1"/>
</dbReference>
<dbReference type="PROSITE" id="PS00080">
    <property type="entry name" value="MULTICOPPER_OXIDASE2"/>
    <property type="match status" value="1"/>
</dbReference>